<dbReference type="EC" id="1.7.2.3"/>
<dbReference type="EC" id="1.8.5.3"/>
<dbReference type="EMBL" id="L46851">
    <property type="protein sequence ID" value="AAB07230.1"/>
    <property type="molecule type" value="Genomic_DNA"/>
</dbReference>
<dbReference type="EMBL" id="D38634">
    <property type="protein sequence ID" value="BAA07615.1"/>
    <property type="molecule type" value="Genomic_DNA"/>
</dbReference>
<dbReference type="EMBL" id="U25037">
    <property type="protein sequence ID" value="AAC13660.1"/>
    <property type="molecule type" value="Genomic_DNA"/>
</dbReference>
<dbReference type="PIR" id="S70012">
    <property type="entry name" value="S70012"/>
</dbReference>
<dbReference type="PDB" id="1EU1">
    <property type="method" value="X-ray"/>
    <property type="resolution" value="1.30 A"/>
    <property type="chains" value="A=43-822"/>
</dbReference>
<dbReference type="PDBsum" id="1EU1"/>
<dbReference type="SMR" id="Q57366"/>
<dbReference type="DrugBank" id="DB02153">
    <property type="generic name" value="3-sulfino-L-alanine"/>
</dbReference>
<dbReference type="DrugBank" id="DB02379">
    <property type="generic name" value="Beta-D-Glucose"/>
</dbReference>
<dbReference type="EvolutionaryTrace" id="Q57366"/>
<dbReference type="GO" id="GO:0030288">
    <property type="term" value="C:outer membrane-bounded periplasmic space"/>
    <property type="evidence" value="ECO:0007669"/>
    <property type="project" value="TreeGrafter"/>
</dbReference>
<dbReference type="GO" id="GO:0009055">
    <property type="term" value="F:electron transfer activity"/>
    <property type="evidence" value="ECO:0007669"/>
    <property type="project" value="TreeGrafter"/>
</dbReference>
<dbReference type="GO" id="GO:0030151">
    <property type="term" value="F:molybdenum ion binding"/>
    <property type="evidence" value="ECO:0007669"/>
    <property type="project" value="TreeGrafter"/>
</dbReference>
<dbReference type="GO" id="GO:0043546">
    <property type="term" value="F:molybdopterin cofactor binding"/>
    <property type="evidence" value="ECO:0007669"/>
    <property type="project" value="InterPro"/>
</dbReference>
<dbReference type="GO" id="GO:0050626">
    <property type="term" value="F:trimethylamine-N-oxide reductase (cytochrome c) activity"/>
    <property type="evidence" value="ECO:0007669"/>
    <property type="project" value="UniProtKB-EC"/>
</dbReference>
<dbReference type="GO" id="GO:0009061">
    <property type="term" value="P:anaerobic respiration"/>
    <property type="evidence" value="ECO:0007669"/>
    <property type="project" value="TreeGrafter"/>
</dbReference>
<dbReference type="CDD" id="cd02793">
    <property type="entry name" value="MopB_CT_DMSOR-BSOR-TMAOR"/>
    <property type="match status" value="1"/>
</dbReference>
<dbReference type="CDD" id="cd02769">
    <property type="entry name" value="MopB_DMSOR-BSOR-TMAOR"/>
    <property type="match status" value="1"/>
</dbReference>
<dbReference type="FunFam" id="2.40.40.20:FF:000009">
    <property type="entry name" value="Biotin sulfoxide reductase 2"/>
    <property type="match status" value="1"/>
</dbReference>
<dbReference type="FunFam" id="3.40.228.10:FF:000003">
    <property type="entry name" value="Biotin sulfoxide reductase 2"/>
    <property type="match status" value="1"/>
</dbReference>
<dbReference type="Gene3D" id="2.40.40.20">
    <property type="match status" value="1"/>
</dbReference>
<dbReference type="Gene3D" id="3.40.50.740">
    <property type="match status" value="1"/>
</dbReference>
<dbReference type="Gene3D" id="3.40.228.10">
    <property type="entry name" value="Dimethylsulfoxide Reductase, domain 2"/>
    <property type="match status" value="1"/>
</dbReference>
<dbReference type="Gene3D" id="3.90.55.10">
    <property type="entry name" value="Dimethylsulfoxide Reductase, domain 3"/>
    <property type="match status" value="1"/>
</dbReference>
<dbReference type="InterPro" id="IPR009010">
    <property type="entry name" value="Asp_de-COase-like_dom_sf"/>
</dbReference>
<dbReference type="InterPro" id="IPR006658">
    <property type="entry name" value="BisC"/>
</dbReference>
<dbReference type="InterPro" id="IPR041954">
    <property type="entry name" value="CT_DMSOR/BSOR/TMAOR"/>
</dbReference>
<dbReference type="InterPro" id="IPR041460">
    <property type="entry name" value="Molybdopterin_N"/>
</dbReference>
<dbReference type="InterPro" id="IPR006657">
    <property type="entry name" value="MoPterin_dinucl-bd_dom"/>
</dbReference>
<dbReference type="InterPro" id="IPR006656">
    <property type="entry name" value="Mopterin_OxRdtase"/>
</dbReference>
<dbReference type="InterPro" id="IPR006655">
    <property type="entry name" value="Mopterin_OxRdtase_prok_CS"/>
</dbReference>
<dbReference type="InterPro" id="IPR050612">
    <property type="entry name" value="Prok_Mopterin_Oxidored"/>
</dbReference>
<dbReference type="InterPro" id="IPR006311">
    <property type="entry name" value="TAT_signal"/>
</dbReference>
<dbReference type="InterPro" id="IPR019546">
    <property type="entry name" value="TAT_signal_bac_arc"/>
</dbReference>
<dbReference type="NCBIfam" id="TIGR00509">
    <property type="entry name" value="bisC_fam"/>
    <property type="match status" value="1"/>
</dbReference>
<dbReference type="NCBIfam" id="NF011682">
    <property type="entry name" value="PRK15102.1"/>
    <property type="match status" value="1"/>
</dbReference>
<dbReference type="NCBIfam" id="TIGR01409">
    <property type="entry name" value="TAT_signal_seq"/>
    <property type="match status" value="1"/>
</dbReference>
<dbReference type="PANTHER" id="PTHR43742">
    <property type="entry name" value="TRIMETHYLAMINE-N-OXIDE REDUCTASE"/>
    <property type="match status" value="1"/>
</dbReference>
<dbReference type="PANTHER" id="PTHR43742:SF10">
    <property type="entry name" value="TRIMETHYLAMINE-N-OXIDE REDUCTASE 2"/>
    <property type="match status" value="1"/>
</dbReference>
<dbReference type="Pfam" id="PF00384">
    <property type="entry name" value="Molybdopterin"/>
    <property type="match status" value="1"/>
</dbReference>
<dbReference type="Pfam" id="PF18364">
    <property type="entry name" value="Molybdopterin_N"/>
    <property type="match status" value="1"/>
</dbReference>
<dbReference type="Pfam" id="PF01568">
    <property type="entry name" value="Molydop_binding"/>
    <property type="match status" value="1"/>
</dbReference>
<dbReference type="SUPFAM" id="SSF50692">
    <property type="entry name" value="ADC-like"/>
    <property type="match status" value="1"/>
</dbReference>
<dbReference type="SUPFAM" id="SSF53706">
    <property type="entry name" value="Formate dehydrogenase/DMSO reductase, domains 1-3"/>
    <property type="match status" value="1"/>
</dbReference>
<dbReference type="PROSITE" id="PS00490">
    <property type="entry name" value="MOLYBDOPTERIN_PROK_2"/>
    <property type="match status" value="1"/>
</dbReference>
<dbReference type="PROSITE" id="PS00932">
    <property type="entry name" value="MOLYBDOPTERIN_PROK_3"/>
    <property type="match status" value="1"/>
</dbReference>
<dbReference type="PROSITE" id="PS51318">
    <property type="entry name" value="TAT"/>
    <property type="match status" value="1"/>
</dbReference>
<feature type="signal peptide" description="Tat-type signal" evidence="1 4 5">
    <location>
        <begin position="1"/>
        <end position="42"/>
    </location>
</feature>
<feature type="chain" id="PRO_0000019146" description="Dimethyl sulfoxide/trimethylamine N-oxide reductase">
    <location>
        <begin position="43"/>
        <end position="822"/>
    </location>
</feature>
<feature type="binding site">
    <location>
        <begin position="158"/>
        <end position="160"/>
    </location>
    <ligand>
        <name>Mo-bis(molybdopterin guanine dinucleotide)</name>
        <dbReference type="ChEBI" id="CHEBI:60539"/>
    </ligand>
</feature>
<feature type="binding site">
    <location>
        <position position="158"/>
    </location>
    <ligand>
        <name>Mo-bis(molybdopterin guanine dinucleotide)</name>
        <dbReference type="ChEBI" id="CHEBI:60539"/>
    </ligand>
</feature>
<feature type="binding site">
    <location>
        <position position="189"/>
    </location>
    <ligand>
        <name>Mo-bis(molybdopterin guanine dinucleotide)</name>
        <dbReference type="ChEBI" id="CHEBI:60539"/>
    </ligand>
    <ligandPart>
        <name>Mo</name>
        <dbReference type="ChEBI" id="CHEBI:28685"/>
    </ligandPart>
</feature>
<feature type="binding site">
    <location>
        <begin position="232"/>
        <end position="233"/>
    </location>
    <ligand>
        <name>Mo-bis(molybdopterin guanine dinucleotide)</name>
        <dbReference type="ChEBI" id="CHEBI:60539"/>
    </ligand>
</feature>
<feature type="binding site">
    <location>
        <begin position="262"/>
        <end position="263"/>
    </location>
    <ligand>
        <name>Mo-bis(molybdopterin guanine dinucleotide)</name>
        <dbReference type="ChEBI" id="CHEBI:60539"/>
    </ligand>
</feature>
<feature type="binding site">
    <location>
        <begin position="283"/>
        <end position="285"/>
    </location>
    <ligand>
        <name>Mo-bis(molybdopterin guanine dinucleotide)</name>
        <dbReference type="ChEBI" id="CHEBI:60539"/>
    </ligand>
</feature>
<feature type="binding site">
    <location>
        <begin position="364"/>
        <end position="365"/>
    </location>
    <ligand>
        <name>Mo-bis(molybdopterin guanine dinucleotide)</name>
        <dbReference type="ChEBI" id="CHEBI:60539"/>
    </ligand>
</feature>
<feature type="binding site">
    <location>
        <position position="368"/>
    </location>
    <ligand>
        <name>Mo-bis(molybdopterin guanine dinucleotide)</name>
        <dbReference type="ChEBI" id="CHEBI:60539"/>
    </ligand>
</feature>
<feature type="binding site">
    <location>
        <position position="476"/>
    </location>
    <ligand>
        <name>Mo-bis(molybdopterin guanine dinucleotide)</name>
        <dbReference type="ChEBI" id="CHEBI:60539"/>
    </ligand>
</feature>
<feature type="binding site">
    <location>
        <position position="480"/>
    </location>
    <ligand>
        <name>Mo-bis(molybdopterin guanine dinucleotide)</name>
        <dbReference type="ChEBI" id="CHEBI:60539"/>
    </ligand>
</feature>
<feature type="binding site">
    <location>
        <begin position="500"/>
        <end position="501"/>
    </location>
    <ligand>
        <name>Mo-bis(molybdopterin guanine dinucleotide)</name>
        <dbReference type="ChEBI" id="CHEBI:60539"/>
    </ligand>
</feature>
<feature type="binding site">
    <location>
        <position position="523"/>
    </location>
    <ligand>
        <name>Mo-bis(molybdopterin guanine dinucleotide)</name>
        <dbReference type="ChEBI" id="CHEBI:60539"/>
    </ligand>
</feature>
<feature type="binding site">
    <location>
        <position position="553"/>
    </location>
    <ligand>
        <name>Mo-bis(molybdopterin guanine dinucleotide)</name>
        <dbReference type="ChEBI" id="CHEBI:60539"/>
    </ligand>
</feature>
<feature type="binding site">
    <location>
        <begin position="683"/>
        <end position="686"/>
    </location>
    <ligand>
        <name>Mo-bis(molybdopterin guanine dinucleotide)</name>
        <dbReference type="ChEBI" id="CHEBI:60539"/>
    </ligand>
</feature>
<feature type="binding site">
    <location>
        <position position="689"/>
    </location>
    <ligand>
        <name>Mo-bis(molybdopterin guanine dinucleotide)</name>
        <dbReference type="ChEBI" id="CHEBI:60539"/>
    </ligand>
</feature>
<feature type="binding site">
    <location>
        <begin position="691"/>
        <end position="693"/>
    </location>
    <ligand>
        <name>Mo-bis(molybdopterin guanine dinucleotide)</name>
        <dbReference type="ChEBI" id="CHEBI:60539"/>
    </ligand>
</feature>
<feature type="binding site">
    <location>
        <position position="779"/>
    </location>
    <ligand>
        <name>Mo-bis(molybdopterin guanine dinucleotide)</name>
        <dbReference type="ChEBI" id="CHEBI:60539"/>
    </ligand>
</feature>
<feature type="binding site">
    <location>
        <begin position="796"/>
        <end position="797"/>
    </location>
    <ligand>
        <name>Mo-bis(molybdopterin guanine dinucleotide)</name>
        <dbReference type="ChEBI" id="CHEBI:60539"/>
    </ligand>
</feature>
<feature type="sequence conflict" description="In Ref. 3; AAC13660." evidence="9" ref="3">
    <original>S</original>
    <variation>V</variation>
    <location>
        <position position="185"/>
    </location>
</feature>
<feature type="sequence conflict" description="In Ref. 3; AAC13660." evidence="9" ref="3">
    <original>A</original>
    <variation>G</variation>
    <location>
        <position position="192"/>
    </location>
</feature>
<feature type="sequence conflict" description="In Ref. 3; AAC13660." evidence="9" ref="3">
    <original>H</original>
    <variation>Y</variation>
    <location>
        <position position="199"/>
    </location>
</feature>
<feature type="sequence conflict" description="In Ref. 3; AAC13660." evidence="9" ref="3">
    <original>HGE</original>
    <variation>MAQ</variation>
    <location>
        <begin position="371"/>
        <end position="373"/>
    </location>
</feature>
<feature type="sequence conflict" description="In Ref. 3; AAC13660." evidence="9" ref="3">
    <original>G</original>
    <variation>A</variation>
    <location>
        <position position="422"/>
    </location>
</feature>
<feature type="sequence conflict" description="In Ref. 3; AAC13660." evidence="9" ref="3">
    <original>W</original>
    <variation>C</variation>
    <location>
        <position position="430"/>
    </location>
</feature>
<feature type="sequence conflict" description="In Ref. 3; AAC13660." evidence="9" ref="3">
    <original>N</original>
    <variation>T</variation>
    <location>
        <position position="695"/>
    </location>
</feature>
<feature type="sequence conflict" description="In Ref. 3; AAC13660." evidence="9" ref="3">
    <original>A</original>
    <variation>V</variation>
    <location>
        <position position="706"/>
    </location>
</feature>
<feature type="sequence conflict" description="In Ref. 3; AAC13660." evidence="9" ref="3">
    <original>A</original>
    <variation>T</variation>
    <location>
        <position position="742"/>
    </location>
</feature>
<feature type="sequence conflict" description="In Ref. 3; AAC13660." evidence="9" ref="3">
    <original>M</original>
    <variation>I</variation>
    <location>
        <position position="749"/>
    </location>
</feature>
<feature type="sequence conflict" description="In Ref. 3; AAC13660." evidence="9" ref="3">
    <original>G</original>
    <variation>D</variation>
    <location>
        <position position="793"/>
    </location>
</feature>
<feature type="strand" evidence="10">
    <location>
        <begin position="48"/>
        <end position="54"/>
    </location>
</feature>
<feature type="strand" evidence="10">
    <location>
        <begin position="57"/>
        <end position="64"/>
    </location>
</feature>
<feature type="strand" evidence="10">
    <location>
        <begin position="67"/>
        <end position="73"/>
    </location>
</feature>
<feature type="helix" evidence="10">
    <location>
        <begin position="84"/>
        <end position="89"/>
    </location>
</feature>
<feature type="turn" evidence="10">
    <location>
        <begin position="90"/>
        <end position="92"/>
    </location>
</feature>
<feature type="strand" evidence="10">
    <location>
        <begin position="101"/>
        <end position="103"/>
    </location>
</feature>
<feature type="helix" evidence="10">
    <location>
        <begin position="104"/>
        <end position="109"/>
    </location>
</feature>
<feature type="helix" evidence="10">
    <location>
        <begin position="110"/>
        <end position="112"/>
    </location>
</feature>
<feature type="helix" evidence="10">
    <location>
        <begin position="115"/>
        <end position="117"/>
    </location>
</feature>
<feature type="strand" evidence="10">
    <location>
        <begin position="123"/>
        <end position="125"/>
    </location>
</feature>
<feature type="helix" evidence="10">
    <location>
        <begin position="128"/>
        <end position="146"/>
    </location>
</feature>
<feature type="helix" evidence="10">
    <location>
        <begin position="148"/>
        <end position="150"/>
    </location>
</feature>
<feature type="helix" evidence="10">
    <location>
        <begin position="167"/>
        <end position="178"/>
    </location>
</feature>
<feature type="strand" evidence="10">
    <location>
        <begin position="182"/>
        <end position="186"/>
    </location>
</feature>
<feature type="strand" evidence="10">
    <location>
        <begin position="188"/>
        <end position="190"/>
    </location>
</feature>
<feature type="helix" evidence="10">
    <location>
        <begin position="193"/>
        <end position="200"/>
    </location>
</feature>
<feature type="helix" evidence="10">
    <location>
        <begin position="213"/>
        <end position="219"/>
    </location>
</feature>
<feature type="strand" evidence="10">
    <location>
        <begin position="221"/>
        <end position="227"/>
    </location>
</feature>
<feature type="helix" evidence="10">
    <location>
        <begin position="230"/>
        <end position="233"/>
    </location>
</feature>
<feature type="strand" evidence="10">
    <location>
        <begin position="238"/>
        <end position="240"/>
    </location>
</feature>
<feature type="helix" evidence="10">
    <location>
        <begin position="244"/>
        <end position="255"/>
    </location>
</feature>
<feature type="strand" evidence="10">
    <location>
        <begin position="258"/>
        <end position="265"/>
    </location>
</feature>
<feature type="helix" evidence="10">
    <location>
        <begin position="268"/>
        <end position="273"/>
    </location>
</feature>
<feature type="strand" evidence="10">
    <location>
        <begin position="276"/>
        <end position="278"/>
    </location>
</feature>
<feature type="helix" evidence="10">
    <location>
        <begin position="285"/>
        <end position="298"/>
    </location>
</feature>
<feature type="helix" evidence="10">
    <location>
        <begin position="304"/>
        <end position="310"/>
    </location>
</feature>
<feature type="helix" evidence="10">
    <location>
        <begin position="314"/>
        <end position="321"/>
    </location>
</feature>
<feature type="turn" evidence="10">
    <location>
        <begin position="322"/>
        <end position="326"/>
    </location>
</feature>
<feature type="helix" evidence="10">
    <location>
        <begin position="332"/>
        <end position="339"/>
    </location>
</feature>
<feature type="helix" evidence="10">
    <location>
        <begin position="343"/>
        <end position="354"/>
    </location>
</feature>
<feature type="strand" evidence="10">
    <location>
        <begin position="358"/>
        <end position="362"/>
    </location>
</feature>
<feature type="helix" evidence="10">
    <location>
        <begin position="365"/>
        <end position="367"/>
    </location>
</feature>
<feature type="turn" evidence="10">
    <location>
        <begin position="370"/>
        <end position="373"/>
    </location>
</feature>
<feature type="helix" evidence="10">
    <location>
        <begin position="374"/>
        <end position="386"/>
    </location>
</feature>
<feature type="strand" evidence="10">
    <location>
        <begin position="395"/>
        <end position="398"/>
    </location>
</feature>
<feature type="turn" evidence="10">
    <location>
        <begin position="403"/>
        <end position="406"/>
    </location>
</feature>
<feature type="strand" evidence="10">
    <location>
        <begin position="437"/>
        <end position="440"/>
    </location>
</feature>
<feature type="helix" evidence="10">
    <location>
        <begin position="441"/>
        <end position="443"/>
    </location>
</feature>
<feature type="helix" evidence="10">
    <location>
        <begin position="444"/>
        <end position="449"/>
    </location>
</feature>
<feature type="strand" evidence="10">
    <location>
        <begin position="454"/>
        <end position="457"/>
    </location>
</feature>
<feature type="strand" evidence="10">
    <location>
        <begin position="460"/>
        <end position="463"/>
    </location>
</feature>
<feature type="strand" evidence="10">
    <location>
        <begin position="469"/>
        <end position="474"/>
    </location>
</feature>
<feature type="helix" evidence="10">
    <location>
        <begin position="477"/>
        <end position="480"/>
    </location>
</feature>
<feature type="helix" evidence="10">
    <location>
        <begin position="484"/>
        <end position="490"/>
    </location>
</feature>
<feature type="helix" evidence="10">
    <location>
        <begin position="491"/>
        <end position="493"/>
    </location>
</feature>
<feature type="strand" evidence="10">
    <location>
        <begin position="495"/>
        <end position="503"/>
    </location>
</feature>
<feature type="helix" evidence="10">
    <location>
        <begin position="506"/>
        <end position="509"/>
    </location>
</feature>
<feature type="strand" evidence="10">
    <location>
        <begin position="512"/>
        <end position="517"/>
    </location>
</feature>
<feature type="helix" evidence="10">
    <location>
        <begin position="520"/>
        <end position="522"/>
    </location>
</feature>
<feature type="strand" evidence="10">
    <location>
        <begin position="525"/>
        <end position="529"/>
    </location>
</feature>
<feature type="turn" evidence="10">
    <location>
        <begin position="531"/>
        <end position="533"/>
    </location>
</feature>
<feature type="strand" evidence="10">
    <location>
        <begin position="536"/>
        <end position="540"/>
    </location>
</feature>
<feature type="helix" evidence="10">
    <location>
        <begin position="553"/>
        <end position="563"/>
    </location>
</feature>
<feature type="helix" evidence="10">
    <location>
        <begin position="567"/>
        <end position="571"/>
    </location>
</feature>
<feature type="helix" evidence="10">
    <location>
        <begin position="576"/>
        <end position="593"/>
    </location>
</feature>
<feature type="helix" evidence="10">
    <location>
        <begin position="601"/>
        <end position="607"/>
    </location>
</feature>
<feature type="strand" evidence="10">
    <location>
        <begin position="609"/>
        <end position="611"/>
    </location>
</feature>
<feature type="helix" evidence="10">
    <location>
        <begin position="616"/>
        <end position="619"/>
    </location>
</feature>
<feature type="helix" evidence="10">
    <location>
        <begin position="624"/>
        <end position="628"/>
    </location>
</feature>
<feature type="turn" evidence="10">
    <location>
        <begin position="630"/>
        <end position="632"/>
    </location>
</feature>
<feature type="strand" evidence="10">
    <location>
        <begin position="640"/>
        <end position="645"/>
    </location>
</feature>
<feature type="helix" evidence="10">
    <location>
        <begin position="647"/>
        <end position="652"/>
    </location>
</feature>
<feature type="strand" evidence="10">
    <location>
        <begin position="677"/>
        <end position="682"/>
    </location>
</feature>
<feature type="strand" evidence="10">
    <location>
        <begin position="687"/>
        <end position="690"/>
    </location>
</feature>
<feature type="turn" evidence="10">
    <location>
        <begin position="694"/>
        <end position="696"/>
    </location>
</feature>
<feature type="helix" evidence="10">
    <location>
        <begin position="698"/>
        <end position="702"/>
    </location>
</feature>
<feature type="strand" evidence="10">
    <location>
        <begin position="710"/>
        <end position="713"/>
    </location>
</feature>
<feature type="helix" evidence="10">
    <location>
        <begin position="715"/>
        <end position="719"/>
    </location>
</feature>
<feature type="turn" evidence="10">
    <location>
        <begin position="720"/>
        <end position="722"/>
    </location>
</feature>
<feature type="strand" evidence="10">
    <location>
        <begin position="728"/>
        <end position="732"/>
    </location>
</feature>
<feature type="strand" evidence="10">
    <location>
        <begin position="737"/>
        <end position="744"/>
    </location>
</feature>
<feature type="strand" evidence="10">
    <location>
        <begin position="752"/>
        <end position="754"/>
    </location>
</feature>
<feature type="strand" evidence="10">
    <location>
        <begin position="773"/>
        <end position="775"/>
    </location>
</feature>
<feature type="helix" evidence="10">
    <location>
        <begin position="778"/>
        <end position="780"/>
    </location>
</feature>
<feature type="turn" evidence="10">
    <location>
        <begin position="789"/>
        <end position="791"/>
    </location>
</feature>
<feature type="strand" evidence="10">
    <location>
        <begin position="800"/>
        <end position="805"/>
    </location>
</feature>
<organism>
    <name type="scientific">Cereibacter sphaeroides</name>
    <name type="common">Rhodobacter sphaeroides</name>
    <dbReference type="NCBI Taxonomy" id="1063"/>
    <lineage>
        <taxon>Bacteria</taxon>
        <taxon>Pseudomonadati</taxon>
        <taxon>Pseudomonadota</taxon>
        <taxon>Alphaproteobacteria</taxon>
        <taxon>Rhodobacterales</taxon>
        <taxon>Paracoccaceae</taxon>
        <taxon>Cereibacter</taxon>
    </lineage>
</organism>
<comment type="function">
    <text evidence="7">Catalyzes the reduction of dimethyl sulfoxide (DMSO) and trimethylamine N-oxide (TMAO) to dimethyl sulfide (DMS) and trimethylamine, respectively. The terminal DMSO reductase can also use various sulfoxides and N-oxide compounds as terminal electron acceptor in addition to DMSO and TMAO.</text>
</comment>
<comment type="catalytic activity">
    <reaction>
        <text>dimethyl sulfide + a menaquinone + H2O = dimethyl sulfoxide + a menaquinol</text>
        <dbReference type="Rhea" id="RHEA:28494"/>
        <dbReference type="Rhea" id="RHEA-COMP:9537"/>
        <dbReference type="Rhea" id="RHEA-COMP:9539"/>
        <dbReference type="ChEBI" id="CHEBI:15377"/>
        <dbReference type="ChEBI" id="CHEBI:16374"/>
        <dbReference type="ChEBI" id="CHEBI:17437"/>
        <dbReference type="ChEBI" id="CHEBI:18151"/>
        <dbReference type="ChEBI" id="CHEBI:28262"/>
        <dbReference type="EC" id="1.8.5.3"/>
    </reaction>
</comment>
<comment type="catalytic activity">
    <reaction>
        <text>trimethylamine + 2 Fe(III)-[cytochrome c] + H2O = trimethylamine N-oxide + 2 Fe(II)-[cytochrome c] + 3 H(+)</text>
        <dbReference type="Rhea" id="RHEA:24236"/>
        <dbReference type="Rhea" id="RHEA-COMP:10350"/>
        <dbReference type="Rhea" id="RHEA-COMP:14399"/>
        <dbReference type="ChEBI" id="CHEBI:15377"/>
        <dbReference type="ChEBI" id="CHEBI:15378"/>
        <dbReference type="ChEBI" id="CHEBI:15724"/>
        <dbReference type="ChEBI" id="CHEBI:29033"/>
        <dbReference type="ChEBI" id="CHEBI:29034"/>
        <dbReference type="ChEBI" id="CHEBI:58389"/>
        <dbReference type="EC" id="1.7.2.3"/>
    </reaction>
</comment>
<comment type="cofactor">
    <cofactor evidence="2 3 8">
        <name>Mo-bis(molybdopterin guanine dinucleotide)</name>
        <dbReference type="ChEBI" id="CHEBI:60539"/>
    </cofactor>
    <text evidence="2 3 8">Binds 1 molybdenum-bis(molybdopterin guanine dinucleotide) (Mo-bis-MGD) cofactor per subunit.</text>
</comment>
<comment type="subunit">
    <text evidence="6 8">Homodimer.</text>
</comment>
<comment type="subcellular location">
    <subcellularLocation>
        <location evidence="2">Periplasm</location>
    </subcellularLocation>
</comment>
<comment type="PTM">
    <text>Predicted to be exported by the Tat system. The position of the signal peptide cleavage has been experimentally proven.</text>
</comment>
<comment type="disruption phenotype">
    <text evidence="7">Disruption of dmsA results in the inability to use DMSO or TMAO as the terminal electron acceptor in anaerobic respiration and in greatly diminished in vitro DMSOR activity.</text>
</comment>
<comment type="similarity">
    <text evidence="9">Belongs to the prokaryotic molybdopterin-containing oxidoreductase family.</text>
</comment>
<evidence type="ECO:0000255" key="1">
    <source>
        <dbReference type="PROSITE-ProRule" id="PRU00648"/>
    </source>
</evidence>
<evidence type="ECO:0000269" key="2">
    <source>
    </source>
</evidence>
<evidence type="ECO:0000269" key="3">
    <source>
    </source>
</evidence>
<evidence type="ECO:0000269" key="4">
    <source>
    </source>
</evidence>
<evidence type="ECO:0000269" key="5">
    <source>
    </source>
</evidence>
<evidence type="ECO:0000269" key="6">
    <source>
    </source>
</evidence>
<evidence type="ECO:0000269" key="7">
    <source>
    </source>
</evidence>
<evidence type="ECO:0000269" key="8">
    <source ref="8"/>
</evidence>
<evidence type="ECO:0000305" key="9"/>
<evidence type="ECO:0007829" key="10">
    <source>
        <dbReference type="PDB" id="1EU1"/>
    </source>
</evidence>
<sequence length="822" mass="89208">MTKLSGQELHAELSRRAFLSYTAAVGALGLCGTSLLAQGARAEGLANGEVMSGCHWGVFKARVENGRAVAFEPWDKDPAPSHQLPGVLDSIYSPTRIKYPMVRREFLEKGVNADRSTRGNGDFVRVTWDEALDLVARELKRVQESYGPTGTFGGSYGWKSPGRLHNCQVLMRRALNLAGGFVNSSGDYSTAAAQIIMPHVMGTLEVYEQQTAWPVVVENTDLMVFWAADPMKTNEIGWVIPDHGAYAGMKALKEKGTRVICINPVRTETADYFGADVVSPRPQTDVALMLGMAHTLYSEDLHDKDFLENCTTGFDLFAAYLTGESDGTPKTAEWAAEICGLPAEQIRELARSFVAGRTMLAAGWSIQRMHHGEQAHWMLVTLASMIGQIGLPGGGFGLSYHYSNGGSPTSDGPALGGISDGGKAVEGAAWLSESGATSIPCARVVDMLLNPGGEFQFNGATATYPDVKLAYWAGGNPFAHHQDRNRMLKAWEKLETFIVQDFQWTATARHADIVLPATTSYERNDIESVGDYSNRAILAMKKVVDPLYEARSDYDIFAALAERLGKGAEFTEGRDEMGWISSFYEAAVKQAEFKNVAMPSFEDFWSEGIVEFPITEGANFVRYADFREDPLFNPLGTPSGLIEIYSKNIEKMGYDDCPAHPTWMEPAERLGGAGAKYPLHVVASHPKSRLHSQLNGTSLRDLYAVAGHEPCLINPADAAARGIADGDVLRVFNDRGQILVGAKVSDAVMPGAIQIYEGGWYDPLDPSEEGTLDKYGDVNVLSLDVGTSKLAQGNCGQTILADVEKYAGAPVTVTVFDTPKGA</sequence>
<accession>Q57366</accession>
<accession>Q53077</accession>
<gene>
    <name type="primary">dmsA</name>
    <name type="synonym">dsrA</name>
</gene>
<protein>
    <recommendedName>
        <fullName>Dimethyl sulfoxide/trimethylamine N-oxide reductase</fullName>
        <shortName>DMSO reductase</shortName>
        <shortName>DMSOR</shortName>
        <shortName>Me2SO reductase</shortName>
        <shortName>TMAOR</shortName>
        <ecNumber>1.7.2.3</ecNumber>
        <ecNumber>1.8.5.3</ecNumber>
    </recommendedName>
</protein>
<keyword id="KW-0002">3D-structure</keyword>
<keyword id="KW-0903">Direct protein sequencing</keyword>
<keyword id="KW-0479">Metal-binding</keyword>
<keyword id="KW-0500">Molybdenum</keyword>
<keyword id="KW-0560">Oxidoreductase</keyword>
<keyword id="KW-0574">Periplasm</keyword>
<keyword id="KW-0732">Signal</keyword>
<proteinExistence type="evidence at protein level"/>
<reference key="1">
    <citation type="journal article" date="1996" name="Biochim. Biophys. Acta">
        <title>Molecular cloning of dimethyl sulfoxide reductase from Rhodobacter sphaeroides.</title>
        <authorList>
            <person name="Hilton J.C."/>
            <person name="Rajagopalan K.V."/>
        </authorList>
    </citation>
    <scope>NUCLEOTIDE SEQUENCE [GENOMIC DNA]</scope>
    <source>
        <strain>f. sp. denitrificans IL106</strain>
    </source>
</reference>
<reference key="2">
    <citation type="journal article" date="1995" name="Biosci. Biotechnol. Biochem.">
        <title>Cloning and nucleotide sequence of the gene encoding dimethyl sulfoxide reductase from Rhodobacter sphaeroides f. sp. denitrificans.</title>
        <authorList>
            <person name="Yamamoto I."/>
            <person name="Wada N."/>
            <person name="Ujiiye T."/>
            <person name="Tachibana M."/>
            <person name="Matsuzaki M."/>
            <person name="Kajiwara H."/>
            <person name="Watanabe Y."/>
            <person name="Hirano H."/>
            <person name="Okubo A."/>
            <person name="Satoh T."/>
            <person name="Yamazaki S."/>
        </authorList>
    </citation>
    <scope>NUCLEOTIDE SEQUENCE [GENOMIC DNA]</scope>
    <scope>PROTEIN SEQUENCE OF N-TERMINUS</scope>
    <scope>PARTIAL PROTEIN SEQUENCE</scope>
    <source>
        <strain>f. sp. denitrificans IL106</strain>
    </source>
</reference>
<reference key="3">
    <citation type="journal article" date="1995" name="Arch. Biochem. Biophys.">
        <title>The amino acid sequence of Rhodobacter sphaeroides dimethyl sulfoxide reductase.</title>
        <authorList>
            <person name="Barber M.J."/>
            <person name="van Valkenburgh H."/>
            <person name="Trimboli A.J."/>
            <person name="Pollock V.V."/>
            <person name="Neame P.J."/>
            <person name="Bastian N.R."/>
        </authorList>
    </citation>
    <scope>NUCLEOTIDE SEQUENCE [GENOMIC DNA] OF 53-815</scope>
    <scope>PROTEIN SEQUENCE OF 43-815</scope>
    <source>
        <strain>f. sp. denitrificans IL106</strain>
    </source>
</reference>
<reference key="4">
    <citation type="journal article" date="1990" name="Proc. Natl. Acad. Sci. U.S.A.">
        <title>Molybdopterin guanine dinucleotide: a modified form of molybdopterin identified in the molybdenum cofactor of dimethyl sulfoxide reductase from Rhodobacter sphaeroides forma specialis denitrificans.</title>
        <authorList>
            <person name="Johnson J.L."/>
            <person name="Bastian N.R."/>
            <person name="Rajagopalan K.V."/>
        </authorList>
    </citation>
    <scope>COFACTOR</scope>
</reference>
<reference key="5">
    <citation type="journal article" date="1991" name="J. Bacteriol.">
        <title>Molybdenum requirement for translocation of dimethyl sulfoxide reductase to the periplasmic space in a photodenitrifier, Rhodobacter sphaeroides f. sp. denitrificans.</title>
        <authorList>
            <person name="Yoshida Y."/>
            <person name="Takai M."/>
            <person name="Satoh T."/>
            <person name="Takami S."/>
        </authorList>
    </citation>
    <scope>SUBCELLULAR LOCATION</scope>
    <scope>COFACTOR</scope>
</reference>
<reference key="6">
    <citation type="journal article" date="1997" name="J. Bacteriol.">
        <title>Characterization of genes encoding dimethyl sulfoxide reductase of Rhodobacter sphaeroides 2.4.1T: an essential metabolic gene function encoded on chromosome II.</title>
        <authorList>
            <person name="Mouncey N.J."/>
            <person name="Choudhary M."/>
            <person name="Kaplan S."/>
        </authorList>
    </citation>
    <scope>FUNCTION AS A DIMETHYL SULFOXIDE AND TRIMETHYLAMINE N-OXIDE REDUCTASE</scope>
    <scope>DISRUPTION PHENOTYPE</scope>
</reference>
<reference key="7">
    <citation type="journal article" date="1996" name="Science">
        <title>Crystal structure of DMSO reductase: redox-linked changes in molybdopterin coordination.</title>
        <authorList>
            <person name="Schindelin H."/>
            <person name="Kisker C."/>
            <person name="Hilton J."/>
            <person name="Rajagopalan K.V."/>
            <person name="Rees D.C."/>
        </authorList>
    </citation>
    <scope>X-RAY CRYSTALLOGRAPHY (2.2 ANGSTROMS) IN COMPLEX WITH COFACTOR</scope>
</reference>
<reference key="8">
    <citation type="journal article" date="2000" name="J. Am. Chem. Soc.">
        <title>The 1.3 A crystal structure of Rhodobacter sphaeroides dimethyl sulfoxide reductase reveals two distinct molybdenum coordination environments.</title>
        <authorList>
            <person name="Li H.-K."/>
            <person name="Temple C."/>
            <person name="Rajagopalan K.V."/>
            <person name="Schindelin H."/>
        </authorList>
    </citation>
    <scope>X-RAY CRYSTALLOGRAPHY (1.3 ANGSTROMS) IN COMPLEX WITH MO-BIS-MGD</scope>
    <scope>COFACTOR</scope>
    <scope>SUBUNIT</scope>
</reference>
<name>DSTOR_CERSP</name>